<comment type="function">
    <text evidence="2">Catalyzes the third of the four reactions of the long-chain fatty acids elongation cycle. This endoplasmic reticulum-bound enzymatic process, allows the addition of two carbons to the chain of long- and very long-chain fatty acids/VLCFAs per cycle. This enzyme catalyzes the dehydration of the 3-hydroxyacyl-CoA intermediate into trans-2,3-enoyl-CoA, within each cycle of fatty acid elongation. Thereby, it participates in the production of VLCFAs of different chain lengths that are involved in multiple biological processes as precursors of membrane lipids and lipid mediators. Involved in Rac1-signaling pathways leading to the modulation of gene expression.</text>
</comment>
<comment type="catalytic activity">
    <reaction evidence="2">
        <text>a very-long-chain (3R)-3-hydroxyacyl-CoA = a very-long-chain (2E)-enoyl-CoA + H2O</text>
        <dbReference type="Rhea" id="RHEA:45812"/>
        <dbReference type="ChEBI" id="CHEBI:15377"/>
        <dbReference type="ChEBI" id="CHEBI:83728"/>
        <dbReference type="ChEBI" id="CHEBI:85440"/>
        <dbReference type="EC" id="4.2.1.134"/>
    </reaction>
    <physiologicalReaction direction="left-to-right" evidence="2">
        <dbReference type="Rhea" id="RHEA:45813"/>
    </physiologicalReaction>
</comment>
<comment type="catalytic activity">
    <reaction evidence="2">
        <text>(3R)-hydroxyhexadecanoyl-CoA = (2E)-hexadecenoyl-CoA + H2O</text>
        <dbReference type="Rhea" id="RHEA:39159"/>
        <dbReference type="ChEBI" id="CHEBI:15377"/>
        <dbReference type="ChEBI" id="CHEBI:61526"/>
        <dbReference type="ChEBI" id="CHEBI:74278"/>
    </reaction>
    <physiologicalReaction direction="left-to-right" evidence="2">
        <dbReference type="Rhea" id="RHEA:39160"/>
    </physiologicalReaction>
</comment>
<comment type="pathway">
    <text evidence="2">Lipid metabolism; fatty acid biosynthesis.</text>
</comment>
<comment type="subcellular location">
    <subcellularLocation>
        <location evidence="2">Endoplasmic reticulum membrane</location>
        <topology evidence="2">Multi-pass membrane protein</topology>
    </subcellularLocation>
</comment>
<comment type="similarity">
    <text evidence="5">Belongs to the very long-chain fatty acids dehydratase HACD family.</text>
</comment>
<comment type="caution">
    <text evidence="2">Shares some similarity with tyrosine phosphatase proteins but it has probably no phosphatase activity.</text>
</comment>
<proteinExistence type="evidence at transcript level"/>
<reference key="1">
    <citation type="journal article" date="2013" name="Nature">
        <title>The zebrafish reference genome sequence and its relationship to the human genome.</title>
        <authorList>
            <person name="Howe K."/>
            <person name="Clark M.D."/>
            <person name="Torroja C.F."/>
            <person name="Torrance J."/>
            <person name="Berthelot C."/>
            <person name="Muffato M."/>
            <person name="Collins J.E."/>
            <person name="Humphray S."/>
            <person name="McLaren K."/>
            <person name="Matthews L."/>
            <person name="McLaren S."/>
            <person name="Sealy I."/>
            <person name="Caccamo M."/>
            <person name="Churcher C."/>
            <person name="Scott C."/>
            <person name="Barrett J.C."/>
            <person name="Koch R."/>
            <person name="Rauch G.J."/>
            <person name="White S."/>
            <person name="Chow W."/>
            <person name="Kilian B."/>
            <person name="Quintais L.T."/>
            <person name="Guerra-Assuncao J.A."/>
            <person name="Zhou Y."/>
            <person name="Gu Y."/>
            <person name="Yen J."/>
            <person name="Vogel J.H."/>
            <person name="Eyre T."/>
            <person name="Redmond S."/>
            <person name="Banerjee R."/>
            <person name="Chi J."/>
            <person name="Fu B."/>
            <person name="Langley E."/>
            <person name="Maguire S.F."/>
            <person name="Laird G.K."/>
            <person name="Lloyd D."/>
            <person name="Kenyon E."/>
            <person name="Donaldson S."/>
            <person name="Sehra H."/>
            <person name="Almeida-King J."/>
            <person name="Loveland J."/>
            <person name="Trevanion S."/>
            <person name="Jones M."/>
            <person name="Quail M."/>
            <person name="Willey D."/>
            <person name="Hunt A."/>
            <person name="Burton J."/>
            <person name="Sims S."/>
            <person name="McLay K."/>
            <person name="Plumb B."/>
            <person name="Davis J."/>
            <person name="Clee C."/>
            <person name="Oliver K."/>
            <person name="Clark R."/>
            <person name="Riddle C."/>
            <person name="Elliot D."/>
            <person name="Threadgold G."/>
            <person name="Harden G."/>
            <person name="Ware D."/>
            <person name="Begum S."/>
            <person name="Mortimore B."/>
            <person name="Kerry G."/>
            <person name="Heath P."/>
            <person name="Phillimore B."/>
            <person name="Tracey A."/>
            <person name="Corby N."/>
            <person name="Dunn M."/>
            <person name="Johnson C."/>
            <person name="Wood J."/>
            <person name="Clark S."/>
            <person name="Pelan S."/>
            <person name="Griffiths G."/>
            <person name="Smith M."/>
            <person name="Glithero R."/>
            <person name="Howden P."/>
            <person name="Barker N."/>
            <person name="Lloyd C."/>
            <person name="Stevens C."/>
            <person name="Harley J."/>
            <person name="Holt K."/>
            <person name="Panagiotidis G."/>
            <person name="Lovell J."/>
            <person name="Beasley H."/>
            <person name="Henderson C."/>
            <person name="Gordon D."/>
            <person name="Auger K."/>
            <person name="Wright D."/>
            <person name="Collins J."/>
            <person name="Raisen C."/>
            <person name="Dyer L."/>
            <person name="Leung K."/>
            <person name="Robertson L."/>
            <person name="Ambridge K."/>
            <person name="Leongamornlert D."/>
            <person name="McGuire S."/>
            <person name="Gilderthorp R."/>
            <person name="Griffiths C."/>
            <person name="Manthravadi D."/>
            <person name="Nichol S."/>
            <person name="Barker G."/>
            <person name="Whitehead S."/>
            <person name="Kay M."/>
            <person name="Brown J."/>
            <person name="Murnane C."/>
            <person name="Gray E."/>
            <person name="Humphries M."/>
            <person name="Sycamore N."/>
            <person name="Barker D."/>
            <person name="Saunders D."/>
            <person name="Wallis J."/>
            <person name="Babbage A."/>
            <person name="Hammond S."/>
            <person name="Mashreghi-Mohammadi M."/>
            <person name="Barr L."/>
            <person name="Martin S."/>
            <person name="Wray P."/>
            <person name="Ellington A."/>
            <person name="Matthews N."/>
            <person name="Ellwood M."/>
            <person name="Woodmansey R."/>
            <person name="Clark G."/>
            <person name="Cooper J."/>
            <person name="Tromans A."/>
            <person name="Grafham D."/>
            <person name="Skuce C."/>
            <person name="Pandian R."/>
            <person name="Andrews R."/>
            <person name="Harrison E."/>
            <person name="Kimberley A."/>
            <person name="Garnett J."/>
            <person name="Fosker N."/>
            <person name="Hall R."/>
            <person name="Garner P."/>
            <person name="Kelly D."/>
            <person name="Bird C."/>
            <person name="Palmer S."/>
            <person name="Gehring I."/>
            <person name="Berger A."/>
            <person name="Dooley C.M."/>
            <person name="Ersan-Urun Z."/>
            <person name="Eser C."/>
            <person name="Geiger H."/>
            <person name="Geisler M."/>
            <person name="Karotki L."/>
            <person name="Kirn A."/>
            <person name="Konantz J."/>
            <person name="Konantz M."/>
            <person name="Oberlander M."/>
            <person name="Rudolph-Geiger S."/>
            <person name="Teucke M."/>
            <person name="Lanz C."/>
            <person name="Raddatz G."/>
            <person name="Osoegawa K."/>
            <person name="Zhu B."/>
            <person name="Rapp A."/>
            <person name="Widaa S."/>
            <person name="Langford C."/>
            <person name="Yang F."/>
            <person name="Schuster S.C."/>
            <person name="Carter N.P."/>
            <person name="Harrow J."/>
            <person name="Ning Z."/>
            <person name="Herrero J."/>
            <person name="Searle S.M."/>
            <person name="Enright A."/>
            <person name="Geisler R."/>
            <person name="Plasterk R.H."/>
            <person name="Lee C."/>
            <person name="Westerfield M."/>
            <person name="de Jong P.J."/>
            <person name="Zon L.I."/>
            <person name="Postlethwait J.H."/>
            <person name="Nusslein-Volhard C."/>
            <person name="Hubbard T.J."/>
            <person name="Roest Crollius H."/>
            <person name="Rogers J."/>
            <person name="Stemple D.L."/>
        </authorList>
    </citation>
    <scope>NUCLEOTIDE SEQUENCE [LARGE SCALE GENOMIC DNA]</scope>
    <source>
        <strain>Tuebingen</strain>
    </source>
</reference>
<reference key="2">
    <citation type="submission" date="2003-07" db="EMBL/GenBank/DDBJ databases">
        <authorList>
            <consortium name="NIH - Zebrafish Gene Collection (ZGC) project"/>
        </authorList>
    </citation>
    <scope>NUCLEOTIDE SEQUENCE [LARGE SCALE MRNA]</scope>
    <source>
        <strain>SJD</strain>
    </source>
</reference>
<organism>
    <name type="scientific">Danio rerio</name>
    <name type="common">Zebrafish</name>
    <name type="synonym">Brachydanio rerio</name>
    <dbReference type="NCBI Taxonomy" id="7955"/>
    <lineage>
        <taxon>Eukaryota</taxon>
        <taxon>Metazoa</taxon>
        <taxon>Chordata</taxon>
        <taxon>Craniata</taxon>
        <taxon>Vertebrata</taxon>
        <taxon>Euteleostomi</taxon>
        <taxon>Actinopterygii</taxon>
        <taxon>Neopterygii</taxon>
        <taxon>Teleostei</taxon>
        <taxon>Ostariophysi</taxon>
        <taxon>Cypriniformes</taxon>
        <taxon>Danionidae</taxon>
        <taxon>Danioninae</taxon>
        <taxon>Danio</taxon>
    </lineage>
</organism>
<evidence type="ECO:0000250" key="1">
    <source>
        <dbReference type="UniProtKB" id="P40857"/>
    </source>
</evidence>
<evidence type="ECO:0000250" key="2">
    <source>
        <dbReference type="UniProtKB" id="Q9P035"/>
    </source>
</evidence>
<evidence type="ECO:0000255" key="3"/>
<evidence type="ECO:0000255" key="4">
    <source>
        <dbReference type="PROSITE-ProRule" id="PRU00547"/>
    </source>
</evidence>
<evidence type="ECO:0000305" key="5"/>
<evidence type="ECO:0000312" key="6">
    <source>
        <dbReference type="EMBL" id="AAH55174.1"/>
    </source>
</evidence>
<evidence type="ECO:0000312" key="7">
    <source>
        <dbReference type="EMBL" id="CAK03707.1"/>
    </source>
</evidence>
<keyword id="KW-0175">Coiled coil</keyword>
<keyword id="KW-0256">Endoplasmic reticulum</keyword>
<keyword id="KW-0275">Fatty acid biosynthesis</keyword>
<keyword id="KW-0276">Fatty acid metabolism</keyword>
<keyword id="KW-0444">Lipid biosynthesis</keyword>
<keyword id="KW-0443">Lipid metabolism</keyword>
<keyword id="KW-0456">Lyase</keyword>
<keyword id="KW-0472">Membrane</keyword>
<keyword id="KW-1185">Reference proteome</keyword>
<keyword id="KW-0812">Transmembrane</keyword>
<keyword id="KW-1133">Transmembrane helix</keyword>
<protein>
    <recommendedName>
        <fullName evidence="5">Very-long-chain (3R)-3-hydroxyacyl-CoA dehydratase</fullName>
        <ecNumber evidence="2">4.2.1.134</ecNumber>
    </recommendedName>
    <alternativeName>
        <fullName evidence="5">3-hydroxyacyl-CoA dehydratase</fullName>
        <shortName evidence="5">HACD</shortName>
    </alternativeName>
    <alternativeName>
        <fullName evidence="5">Protein-tyrosine phosphatase-like A domain-containing protein 1</fullName>
    </alternativeName>
</protein>
<sequence length="359" mass="42412">MSALTPHVYWAQRHGEIYLRVEISDAQDLSIGVEENILQFRGQGHGAKGENEYEFSLEFLKPVKPEVKHKSTQRQVNITVRKQEEVWWNRLTKQEKKPLFLAPDFDRWLDESDAEMELREKEEKINKVSFESRVRKDPFLGLKKGFLFMYNLVQFLGYSWIFVNMTVRLFILGQDSFYDTFHTIADVMYFCQMLAIMEVINPAVGLVKTGVMPAFIQVMGRNFILFVIFGSLEDMQNKPVVFFVFYLWSTIEIFRYPFYMLACIDTEWKLLTWLRYTIWMPLYPLGVLAEAVAVIQSIPIFDETKLLSIPLPKATGLSLSFSYILQLYLVVMFLGLFINFRHLFKQRTRRFRTKKRKAN</sequence>
<dbReference type="EC" id="4.2.1.134" evidence="2"/>
<dbReference type="EMBL" id="BX548060">
    <property type="protein sequence ID" value="CAK03707.1"/>
    <property type="molecule type" value="Genomic_DNA"/>
</dbReference>
<dbReference type="EMBL" id="BC055174">
    <property type="protein sequence ID" value="AAH55174.1"/>
    <property type="molecule type" value="mRNA"/>
</dbReference>
<dbReference type="RefSeq" id="NP_001038449.1">
    <property type="nucleotide sequence ID" value="NM_001044984.1"/>
</dbReference>
<dbReference type="SMR" id="Q7SY06"/>
<dbReference type="FunCoup" id="Q7SY06">
    <property type="interactions" value="921"/>
</dbReference>
<dbReference type="STRING" id="7955.ENSDARP00000016888"/>
<dbReference type="PaxDb" id="7955-ENSDARP00000016888"/>
<dbReference type="Ensembl" id="ENSDART00000006300">
    <property type="protein sequence ID" value="ENSDARP00000016888"/>
    <property type="gene ID" value="ENSDARG00000016038"/>
</dbReference>
<dbReference type="Ensembl" id="ENSDART00000192343">
    <property type="protein sequence ID" value="ENSDARP00000157245"/>
    <property type="gene ID" value="ENSDARG00000112437"/>
</dbReference>
<dbReference type="GeneID" id="393441"/>
<dbReference type="KEGG" id="dre:393441"/>
<dbReference type="AGR" id="ZFIN:ZDB-GENE-040426-1200"/>
<dbReference type="CTD" id="51495"/>
<dbReference type="ZFIN" id="ZDB-GENE-040426-1200">
    <property type="gene designation" value="hacd3"/>
</dbReference>
<dbReference type="eggNOG" id="KOG3187">
    <property type="taxonomic scope" value="Eukaryota"/>
</dbReference>
<dbReference type="HOGENOM" id="CLU_046712_0_0_1"/>
<dbReference type="InParanoid" id="Q7SY06"/>
<dbReference type="OMA" id="SYLVMSH"/>
<dbReference type="OrthoDB" id="2157530at2759"/>
<dbReference type="PhylomeDB" id="Q7SY06"/>
<dbReference type="TreeFam" id="TF313326"/>
<dbReference type="Reactome" id="R-DRE-75876">
    <property type="pathway name" value="Synthesis of very long-chain fatty acyl-CoAs"/>
</dbReference>
<dbReference type="UniPathway" id="UPA00094"/>
<dbReference type="PRO" id="PR:Q7SY06"/>
<dbReference type="Proteomes" id="UP000000437">
    <property type="component" value="Alternate scaffold 18"/>
</dbReference>
<dbReference type="Proteomes" id="UP000000437">
    <property type="component" value="Chromosome 18"/>
</dbReference>
<dbReference type="Bgee" id="ENSDARG00000016038">
    <property type="expression patterns" value="Expressed in spleen and 26 other cell types or tissues"/>
</dbReference>
<dbReference type="ExpressionAtlas" id="Q7SY06">
    <property type="expression patterns" value="baseline and differential"/>
</dbReference>
<dbReference type="GO" id="GO:0005783">
    <property type="term" value="C:endoplasmic reticulum"/>
    <property type="evidence" value="ECO:0000250"/>
    <property type="project" value="UniProtKB"/>
</dbReference>
<dbReference type="GO" id="GO:0005789">
    <property type="term" value="C:endoplasmic reticulum membrane"/>
    <property type="evidence" value="ECO:0000318"/>
    <property type="project" value="GO_Central"/>
</dbReference>
<dbReference type="GO" id="GO:0018812">
    <property type="term" value="F:3-hydroxyacyl-CoA dehydratase activity"/>
    <property type="evidence" value="ECO:0000318"/>
    <property type="project" value="GO_Central"/>
</dbReference>
<dbReference type="GO" id="GO:0102158">
    <property type="term" value="F:very-long-chain (3R)-3-hydroxyacyl-CoA dehydratase activity"/>
    <property type="evidence" value="ECO:0000250"/>
    <property type="project" value="UniProtKB"/>
</dbReference>
<dbReference type="GO" id="GO:0030497">
    <property type="term" value="P:fatty acid elongation"/>
    <property type="evidence" value="ECO:0000250"/>
    <property type="project" value="UniProtKB"/>
</dbReference>
<dbReference type="GO" id="GO:0030148">
    <property type="term" value="P:sphingolipid biosynthetic process"/>
    <property type="evidence" value="ECO:0000318"/>
    <property type="project" value="GO_Central"/>
</dbReference>
<dbReference type="GO" id="GO:0042761">
    <property type="term" value="P:very long-chain fatty acid biosynthetic process"/>
    <property type="evidence" value="ECO:0000250"/>
    <property type="project" value="UniProtKB"/>
</dbReference>
<dbReference type="CDD" id="cd06465">
    <property type="entry name" value="p23_hB-ind1_like"/>
    <property type="match status" value="1"/>
</dbReference>
<dbReference type="FunFam" id="2.60.40.790:FF:000016">
    <property type="entry name" value="Very-long-chain (3R)-3-hydroxyacyl-CoA dehydratase"/>
    <property type="match status" value="1"/>
</dbReference>
<dbReference type="Gene3D" id="2.60.40.790">
    <property type="match status" value="1"/>
</dbReference>
<dbReference type="InterPro" id="IPR007052">
    <property type="entry name" value="CS_dom"/>
</dbReference>
<dbReference type="InterPro" id="IPR008978">
    <property type="entry name" value="HSP20-like_chaperone"/>
</dbReference>
<dbReference type="InterPro" id="IPR007482">
    <property type="entry name" value="Tyr_Pase-like_PTPLA"/>
</dbReference>
<dbReference type="PANTHER" id="PTHR11035">
    <property type="entry name" value="VERY-LONG-CHAIN (3R)-3-HYDROXYACYL-COA DEHYDRATASE"/>
    <property type="match status" value="1"/>
</dbReference>
<dbReference type="PANTHER" id="PTHR11035:SF20">
    <property type="entry name" value="VERY-LONG-CHAIN (3R)-3-HYDROXYACYL-COA DEHYDRATASE 3"/>
    <property type="match status" value="1"/>
</dbReference>
<dbReference type="Pfam" id="PF04387">
    <property type="entry name" value="PTPLA"/>
    <property type="match status" value="1"/>
</dbReference>
<dbReference type="SUPFAM" id="SSF49764">
    <property type="entry name" value="HSP20-like chaperones"/>
    <property type="match status" value="1"/>
</dbReference>
<dbReference type="PROSITE" id="PS51203">
    <property type="entry name" value="CS"/>
    <property type="match status" value="1"/>
</dbReference>
<feature type="chain" id="PRO_0000313728" description="Very-long-chain (3R)-3-hydroxyacyl-CoA dehydratase">
    <location>
        <begin position="1"/>
        <end position="359"/>
    </location>
</feature>
<feature type="topological domain" description="Cytoplasmic" evidence="3">
    <location>
        <begin position="1"/>
        <end position="144"/>
    </location>
</feature>
<feature type="transmembrane region" description="Helical" evidence="3">
    <location>
        <begin position="145"/>
        <end position="165"/>
    </location>
</feature>
<feature type="topological domain" description="Lumenal" evidence="3">
    <location>
        <begin position="166"/>
        <end position="186"/>
    </location>
</feature>
<feature type="transmembrane region" description="Helical" evidence="3">
    <location>
        <begin position="187"/>
        <end position="207"/>
    </location>
</feature>
<feature type="topological domain" description="Cytoplasmic" evidence="3">
    <location>
        <begin position="208"/>
        <end position="209"/>
    </location>
</feature>
<feature type="transmembrane region" description="Helical" evidence="3">
    <location>
        <begin position="210"/>
        <end position="230"/>
    </location>
</feature>
<feature type="topological domain" description="Lumenal" evidence="3">
    <location>
        <begin position="231"/>
        <end position="239"/>
    </location>
</feature>
<feature type="transmembrane region" description="Helical" evidence="3">
    <location>
        <begin position="240"/>
        <end position="260"/>
    </location>
</feature>
<feature type="topological domain" description="Cytoplasmic" evidence="3">
    <location>
        <begin position="261"/>
        <end position="277"/>
    </location>
</feature>
<feature type="transmembrane region" description="Helical" evidence="3">
    <location>
        <begin position="278"/>
        <end position="298"/>
    </location>
</feature>
<feature type="topological domain" description="Lumenal" evidence="3">
    <location>
        <begin position="299"/>
        <end position="317"/>
    </location>
</feature>
<feature type="transmembrane region" description="Helical" evidence="3">
    <location>
        <begin position="318"/>
        <end position="338"/>
    </location>
</feature>
<feature type="topological domain" description="Cytoplasmic" evidence="3">
    <location>
        <begin position="339"/>
        <end position="359"/>
    </location>
</feature>
<feature type="domain" description="CS" evidence="4">
    <location>
        <begin position="3"/>
        <end position="92"/>
    </location>
</feature>
<feature type="coiled-coil region" evidence="3">
    <location>
        <begin position="109"/>
        <end position="133"/>
    </location>
</feature>
<feature type="active site" evidence="1">
    <location>
        <position position="283"/>
    </location>
</feature>
<feature type="active site" evidence="1">
    <location>
        <position position="290"/>
    </location>
</feature>
<feature type="sequence conflict" description="In Ref. 2; AAH55174." evidence="5" ref="2">
    <original>I</original>
    <variation>T</variation>
    <location>
        <position position="200"/>
    </location>
</feature>
<feature type="sequence conflict" description="In Ref. 2; AAH55174." evidence="5" ref="2">
    <original>T</original>
    <variation>A</variation>
    <location>
        <position position="304"/>
    </location>
</feature>
<accession>Q7SY06</accession>
<accession>Q1LWK3</accession>
<name>HACD3_DANRE</name>
<gene>
    <name evidence="5" type="primary">hacd3</name>
    <name evidence="5" type="synonym">ptplad1</name>
    <name evidence="7" type="ORF">si:ch211-117i10.7</name>
    <name evidence="6" type="ORF">zgc:63632</name>
</gene>